<feature type="chain" id="PRO_0000080618" description="Ubiquitin carboxyl-terminal hydrolase 2">
    <location>
        <begin position="1"/>
        <end position="357"/>
    </location>
</feature>
<feature type="domain" description="USP">
    <location>
        <begin position="19"/>
        <end position="351"/>
    </location>
</feature>
<feature type="active site" description="Nucleophile" evidence="3 4">
    <location>
        <position position="28"/>
    </location>
</feature>
<feature type="active site" description="Proton acceptor" evidence="3 4">
    <location>
        <position position="309"/>
    </location>
</feature>
<feature type="binding site" evidence="1">
    <location>
        <position position="177"/>
    </location>
    <ligand>
        <name>Zn(2+)</name>
        <dbReference type="ChEBI" id="CHEBI:29105"/>
    </ligand>
</feature>
<feature type="binding site" evidence="1">
    <location>
        <position position="180"/>
    </location>
    <ligand>
        <name>Zn(2+)</name>
        <dbReference type="ChEBI" id="CHEBI:29105"/>
    </ligand>
</feature>
<feature type="binding site" evidence="1">
    <location>
        <position position="228"/>
    </location>
    <ligand>
        <name>Zn(2+)</name>
        <dbReference type="ChEBI" id="CHEBI:29105"/>
    </ligand>
</feature>
<feature type="binding site" evidence="1">
    <location>
        <position position="231"/>
    </location>
    <ligand>
        <name>Zn(2+)</name>
        <dbReference type="ChEBI" id="CHEBI:29105"/>
    </ligand>
</feature>
<organism>
    <name type="scientific">Gallus gallus</name>
    <name type="common">Chicken</name>
    <dbReference type="NCBI Taxonomy" id="9031"/>
    <lineage>
        <taxon>Eukaryota</taxon>
        <taxon>Metazoa</taxon>
        <taxon>Chordata</taxon>
        <taxon>Craniata</taxon>
        <taxon>Vertebrata</taxon>
        <taxon>Euteleostomi</taxon>
        <taxon>Archelosauria</taxon>
        <taxon>Archosauria</taxon>
        <taxon>Dinosauria</taxon>
        <taxon>Saurischia</taxon>
        <taxon>Theropoda</taxon>
        <taxon>Coelurosauria</taxon>
        <taxon>Aves</taxon>
        <taxon>Neognathae</taxon>
        <taxon>Galloanserae</taxon>
        <taxon>Galliformes</taxon>
        <taxon>Phasianidae</taxon>
        <taxon>Phasianinae</taxon>
        <taxon>Gallus</taxon>
    </lineage>
</organism>
<protein>
    <recommendedName>
        <fullName>Ubiquitin carboxyl-terminal hydrolase 2</fullName>
        <ecNumber>3.4.19.12</ecNumber>
    </recommendedName>
    <alternativeName>
        <fullName>41 kDa ubiquitin-specific protease</fullName>
    </alternativeName>
    <alternativeName>
        <fullName>Deubiquitinating enzyme 2</fullName>
    </alternativeName>
    <alternativeName>
        <fullName>Ubiquitin thioesterase 2</fullName>
    </alternativeName>
    <alternativeName>
        <fullName>Ubiquitin-specific-processing protease 2</fullName>
    </alternativeName>
</protein>
<evidence type="ECO:0000250" key="1">
    <source>
        <dbReference type="UniProtKB" id="O75604"/>
    </source>
</evidence>
<evidence type="ECO:0000250" key="2">
    <source>
        <dbReference type="UniProtKB" id="O88623"/>
    </source>
</evidence>
<evidence type="ECO:0000255" key="3">
    <source>
        <dbReference type="PROSITE-ProRule" id="PRU10092"/>
    </source>
</evidence>
<evidence type="ECO:0000255" key="4">
    <source>
        <dbReference type="PROSITE-ProRule" id="PRU10093"/>
    </source>
</evidence>
<evidence type="ECO:0000305" key="5"/>
<proteinExistence type="evidence at transcript level"/>
<reference key="1">
    <citation type="journal article" date="1997" name="J. Biol. Chem.">
        <title>Molecular cloning of a novel ubiquitin-specific protease, UBP41, with isopeptidase activity in chick skeletal muscle.</title>
        <authorList>
            <person name="Baek S."/>
            <person name="Choi K.S."/>
            <person name="Yoo Y.J."/>
            <person name="Cho J.M."/>
            <person name="Baker R.T."/>
            <person name="Tanaka K."/>
            <person name="Chung C.H."/>
        </authorList>
    </citation>
    <scope>NUCLEOTIDE SEQUENCE [MRNA]</scope>
    <source>
        <tissue>Skeletal muscle</tissue>
    </source>
</reference>
<sequence>MAARMAPTPRSSKVVQGLTGLRNLGNTCFMNSILQCLSNTKELRDYCLQNQYLRDLNNNSRMRTALMSEFAKLIQLLWTSSPNDSVSPSEFKTQIQRYAPRFVGYNQQDAQEFLRFLLDGLHGEVNRVLVRPRANADTLDHLPDDEKSRQMWRRYQEREDSRVSDLFVGQLKSSLTCSECGYCSTAFDPFWDLSLPIPKKGYGEVTLMDCLRLFTKEDVLDGDEKPTCCRCKARTRCTKKFSIQKFPKILVLHLKRFSEARIRASKLTTFVNFPLKDLDLREFASQSCNHAVYNLYAVSNHSGTTMGGHYTAYCKSPISSEWHSFNDSRVTPMSSSHVRSSDAYLLFYELASPSSRM</sequence>
<name>UBP2_CHICK</name>
<comment type="function">
    <text evidence="1 2">Hydrolase that deubiquitinates polyubiquitinated target proteins such as MDM2, MDM4 and CCND1. Possesses both ubiquitin-specific peptidase and isopeptidase activities. May play a role in the regulation of the circadian clock.</text>
</comment>
<comment type="catalytic activity">
    <reaction>
        <text>Thiol-dependent hydrolysis of ester, thioester, amide, peptide and isopeptide bonds formed by the C-terminal Gly of ubiquitin (a 76-residue protein attached to proteins as an intracellular targeting signal).</text>
        <dbReference type="EC" id="3.4.19.12"/>
    </reaction>
</comment>
<comment type="subunit">
    <text evidence="2">Homooligomer.</text>
</comment>
<comment type="subcellular location">
    <subcellularLocation>
        <location evidence="2">Cytoplasm</location>
    </subcellularLocation>
    <subcellularLocation>
        <location evidence="2">Cytoplasm</location>
        <location evidence="2">Perinuclear region</location>
    </subcellularLocation>
</comment>
<comment type="similarity">
    <text evidence="5">Belongs to the peptidase C19 family. USP2 subfamily.</text>
</comment>
<accession>O57429</accession>
<keyword id="KW-0090">Biological rhythms</keyword>
<keyword id="KW-0963">Cytoplasm</keyword>
<keyword id="KW-0378">Hydrolase</keyword>
<keyword id="KW-0479">Metal-binding</keyword>
<keyword id="KW-0645">Protease</keyword>
<keyword id="KW-1185">Reference proteome</keyword>
<keyword id="KW-0788">Thiol protease</keyword>
<keyword id="KW-0833">Ubl conjugation pathway</keyword>
<keyword id="KW-0862">Zinc</keyword>
<dbReference type="EC" id="3.4.19.12"/>
<dbReference type="EMBL" id="AF016107">
    <property type="protein sequence ID" value="AAC13729.1"/>
    <property type="molecule type" value="mRNA"/>
</dbReference>
<dbReference type="SMR" id="O57429"/>
<dbReference type="FunCoup" id="O57429">
    <property type="interactions" value="69"/>
</dbReference>
<dbReference type="STRING" id="9031.ENSGALP00000063447"/>
<dbReference type="MEROPS" id="C19.013"/>
<dbReference type="PaxDb" id="9031-ENSGALP00000040033"/>
<dbReference type="VEuPathDB" id="HostDB:geneid_395766"/>
<dbReference type="eggNOG" id="KOG1868">
    <property type="taxonomic scope" value="Eukaryota"/>
</dbReference>
<dbReference type="InParanoid" id="O57429"/>
<dbReference type="OrthoDB" id="265306at2759"/>
<dbReference type="PhylomeDB" id="O57429"/>
<dbReference type="Proteomes" id="UP000000539">
    <property type="component" value="Unassembled WGS sequence"/>
</dbReference>
<dbReference type="GO" id="GO:0005737">
    <property type="term" value="C:cytoplasm"/>
    <property type="evidence" value="ECO:0000318"/>
    <property type="project" value="GO_Central"/>
</dbReference>
<dbReference type="GO" id="GO:0048471">
    <property type="term" value="C:perinuclear region of cytoplasm"/>
    <property type="evidence" value="ECO:0007669"/>
    <property type="project" value="UniProtKB-SubCell"/>
</dbReference>
<dbReference type="GO" id="GO:0004843">
    <property type="term" value="F:cysteine-type deubiquitinase activity"/>
    <property type="evidence" value="ECO:0000314"/>
    <property type="project" value="Roslin"/>
</dbReference>
<dbReference type="GO" id="GO:0046872">
    <property type="term" value="F:metal ion binding"/>
    <property type="evidence" value="ECO:0007669"/>
    <property type="project" value="UniProtKB-KW"/>
</dbReference>
<dbReference type="GO" id="GO:0016579">
    <property type="term" value="P:protein deubiquitination"/>
    <property type="evidence" value="ECO:0000314"/>
    <property type="project" value="Roslin"/>
</dbReference>
<dbReference type="GO" id="GO:0006508">
    <property type="term" value="P:proteolysis"/>
    <property type="evidence" value="ECO:0007669"/>
    <property type="project" value="UniProtKB-KW"/>
</dbReference>
<dbReference type="GO" id="GO:0048511">
    <property type="term" value="P:rhythmic process"/>
    <property type="evidence" value="ECO:0007669"/>
    <property type="project" value="UniProtKB-KW"/>
</dbReference>
<dbReference type="CDD" id="cd02674">
    <property type="entry name" value="Peptidase_C19R"/>
    <property type="match status" value="1"/>
</dbReference>
<dbReference type="FunFam" id="3.90.70.10:FF:000024">
    <property type="entry name" value="Ubiquitin carboxyl-terminal hydrolase 2"/>
    <property type="match status" value="1"/>
</dbReference>
<dbReference type="Gene3D" id="3.90.70.10">
    <property type="entry name" value="Cysteine proteinases"/>
    <property type="match status" value="1"/>
</dbReference>
<dbReference type="InterPro" id="IPR038765">
    <property type="entry name" value="Papain-like_cys_pep_sf"/>
</dbReference>
<dbReference type="InterPro" id="IPR001394">
    <property type="entry name" value="Peptidase_C19_UCH"/>
</dbReference>
<dbReference type="InterPro" id="IPR050185">
    <property type="entry name" value="Ub_carboxyl-term_hydrolase"/>
</dbReference>
<dbReference type="InterPro" id="IPR018200">
    <property type="entry name" value="USP_CS"/>
</dbReference>
<dbReference type="InterPro" id="IPR028889">
    <property type="entry name" value="USP_dom"/>
</dbReference>
<dbReference type="PANTHER" id="PTHR21646">
    <property type="entry name" value="UBIQUITIN CARBOXYL-TERMINAL HYDROLASE"/>
    <property type="match status" value="1"/>
</dbReference>
<dbReference type="PANTHER" id="PTHR21646:SF17">
    <property type="entry name" value="UBIQUITIN CARBOXYL-TERMINAL HYDROLASE 2"/>
    <property type="match status" value="1"/>
</dbReference>
<dbReference type="Pfam" id="PF00443">
    <property type="entry name" value="UCH"/>
    <property type="match status" value="1"/>
</dbReference>
<dbReference type="SUPFAM" id="SSF54001">
    <property type="entry name" value="Cysteine proteinases"/>
    <property type="match status" value="1"/>
</dbReference>
<dbReference type="PROSITE" id="PS00972">
    <property type="entry name" value="USP_1"/>
    <property type="match status" value="1"/>
</dbReference>
<dbReference type="PROSITE" id="PS00973">
    <property type="entry name" value="USP_2"/>
    <property type="match status" value="1"/>
</dbReference>
<dbReference type="PROSITE" id="PS50235">
    <property type="entry name" value="USP_3"/>
    <property type="match status" value="1"/>
</dbReference>
<gene>
    <name type="primary">USP2</name>
    <name type="synonym">UBP41</name>
</gene>